<sequence length="189" mass="21418">MFIINWFWDILAQLGLAHKNAKILFLGLDNAGKTTLLHMLKNDRLATLQPTLHPTSEELAIGQVKFTTYDLGGHQQARRLWKDYFPEVDGIVFLVDTQDHERFAEARAELDALLSIEELSSVPFLILGNKIDAPGAVSEEELRQAIGLYQTTGKGKVPLKDIRPIEIFMCSVVMRQGYGEGFRWISQYI</sequence>
<feature type="chain" id="PRO_0000295524" description="Small COPII coat GTPase SAR1">
    <location>
        <begin position="1"/>
        <end position="189"/>
    </location>
</feature>
<feature type="binding site" evidence="1">
    <location>
        <begin position="27"/>
        <end position="34"/>
    </location>
    <ligand>
        <name>GTP</name>
        <dbReference type="ChEBI" id="CHEBI:37565"/>
    </ligand>
</feature>
<feature type="binding site" evidence="1">
    <location>
        <begin position="70"/>
        <end position="73"/>
    </location>
    <ligand>
        <name>GTP</name>
        <dbReference type="ChEBI" id="CHEBI:37565"/>
    </ligand>
</feature>
<feature type="binding site" evidence="1">
    <location>
        <begin position="129"/>
        <end position="132"/>
    </location>
    <ligand>
        <name>GTP</name>
        <dbReference type="ChEBI" id="CHEBI:37565"/>
    </ligand>
</feature>
<reference key="1">
    <citation type="journal article" date="2006" name="Nature">
        <title>Insights from the genome of the biotrophic fungal plant pathogen Ustilago maydis.</title>
        <authorList>
            <person name="Kaemper J."/>
            <person name="Kahmann R."/>
            <person name="Boelker M."/>
            <person name="Ma L.-J."/>
            <person name="Brefort T."/>
            <person name="Saville B.J."/>
            <person name="Banuett F."/>
            <person name="Kronstad J.W."/>
            <person name="Gold S.E."/>
            <person name="Mueller O."/>
            <person name="Perlin M.H."/>
            <person name="Woesten H.A.B."/>
            <person name="de Vries R."/>
            <person name="Ruiz-Herrera J."/>
            <person name="Reynaga-Pena C.G."/>
            <person name="Snetselaar K."/>
            <person name="McCann M."/>
            <person name="Perez-Martin J."/>
            <person name="Feldbruegge M."/>
            <person name="Basse C.W."/>
            <person name="Steinberg G."/>
            <person name="Ibeas J.I."/>
            <person name="Holloman W."/>
            <person name="Guzman P."/>
            <person name="Farman M.L."/>
            <person name="Stajich J.E."/>
            <person name="Sentandreu R."/>
            <person name="Gonzalez-Prieto J.M."/>
            <person name="Kennell J.C."/>
            <person name="Molina L."/>
            <person name="Schirawski J."/>
            <person name="Mendoza-Mendoza A."/>
            <person name="Greilinger D."/>
            <person name="Muench K."/>
            <person name="Roessel N."/>
            <person name="Scherer M."/>
            <person name="Vranes M."/>
            <person name="Ladendorf O."/>
            <person name="Vincon V."/>
            <person name="Fuchs U."/>
            <person name="Sandrock B."/>
            <person name="Meng S."/>
            <person name="Ho E.C.H."/>
            <person name="Cahill M.J."/>
            <person name="Boyce K.J."/>
            <person name="Klose J."/>
            <person name="Klosterman S.J."/>
            <person name="Deelstra H.J."/>
            <person name="Ortiz-Castellanos L."/>
            <person name="Li W."/>
            <person name="Sanchez-Alonso P."/>
            <person name="Schreier P.H."/>
            <person name="Haeuser-Hahn I."/>
            <person name="Vaupel M."/>
            <person name="Koopmann E."/>
            <person name="Friedrich G."/>
            <person name="Voss H."/>
            <person name="Schlueter T."/>
            <person name="Margolis J."/>
            <person name="Platt D."/>
            <person name="Swimmer C."/>
            <person name="Gnirke A."/>
            <person name="Chen F."/>
            <person name="Vysotskaia V."/>
            <person name="Mannhaupt G."/>
            <person name="Gueldener U."/>
            <person name="Muensterkoetter M."/>
            <person name="Haase D."/>
            <person name="Oesterheld M."/>
            <person name="Mewes H.-W."/>
            <person name="Mauceli E.W."/>
            <person name="DeCaprio D."/>
            <person name="Wade C.M."/>
            <person name="Butler J."/>
            <person name="Young S.K."/>
            <person name="Jaffe D.B."/>
            <person name="Calvo S.E."/>
            <person name="Nusbaum C."/>
            <person name="Galagan J.E."/>
            <person name="Birren B.W."/>
        </authorList>
    </citation>
    <scope>NUCLEOTIDE SEQUENCE [LARGE SCALE GENOMIC DNA]</scope>
    <source>
        <strain>DSM 14603 / FGSC 9021 / UM521</strain>
    </source>
</reference>
<reference key="2">
    <citation type="submission" date="2014-09" db="EMBL/GenBank/DDBJ databases">
        <authorList>
            <person name="Gueldener U."/>
            <person name="Muensterkoetter M."/>
            <person name="Walter M.C."/>
            <person name="Mannhaupt G."/>
            <person name="Kahmann R."/>
        </authorList>
    </citation>
    <scope>GENOME REANNOTATION</scope>
    <source>
        <strain>DSM 14603 / FGSC 9021 / UM521</strain>
    </source>
</reference>
<dbReference type="EC" id="3.6.5.-"/>
<dbReference type="EMBL" id="CM003162">
    <property type="protein sequence ID" value="KIS65674.1"/>
    <property type="molecule type" value="Genomic_DNA"/>
</dbReference>
<dbReference type="RefSeq" id="XP_011392666.1">
    <property type="nucleotide sequence ID" value="XM_011394364.1"/>
</dbReference>
<dbReference type="SMR" id="Q4P0I7"/>
<dbReference type="FunCoup" id="Q4P0I7">
    <property type="interactions" value="472"/>
</dbReference>
<dbReference type="STRING" id="237631.Q4P0I7"/>
<dbReference type="EnsemblFungi" id="KIS65674">
    <property type="protein sequence ID" value="KIS65674"/>
    <property type="gene ID" value="UMAG_06376"/>
</dbReference>
<dbReference type="GeneID" id="23565981"/>
<dbReference type="KEGG" id="uma:UMAG_06376"/>
<dbReference type="VEuPathDB" id="FungiDB:UMAG_06376"/>
<dbReference type="eggNOG" id="KOG0077">
    <property type="taxonomic scope" value="Eukaryota"/>
</dbReference>
<dbReference type="HOGENOM" id="CLU_040729_6_0_1"/>
<dbReference type="InParanoid" id="Q4P0I7"/>
<dbReference type="OMA" id="GLWNKHG"/>
<dbReference type="OrthoDB" id="2011769at2759"/>
<dbReference type="Proteomes" id="UP000000561">
    <property type="component" value="Chromosome 23"/>
</dbReference>
<dbReference type="GO" id="GO:0030127">
    <property type="term" value="C:COPII vesicle coat"/>
    <property type="evidence" value="ECO:0000318"/>
    <property type="project" value="GO_Central"/>
</dbReference>
<dbReference type="GO" id="GO:0070971">
    <property type="term" value="C:endoplasmic reticulum exit site"/>
    <property type="evidence" value="ECO:0000318"/>
    <property type="project" value="GO_Central"/>
</dbReference>
<dbReference type="GO" id="GO:0005789">
    <property type="term" value="C:endoplasmic reticulum membrane"/>
    <property type="evidence" value="ECO:0007669"/>
    <property type="project" value="UniProtKB-SubCell"/>
</dbReference>
<dbReference type="GO" id="GO:0000139">
    <property type="term" value="C:Golgi membrane"/>
    <property type="evidence" value="ECO:0007669"/>
    <property type="project" value="UniProtKB-SubCell"/>
</dbReference>
<dbReference type="GO" id="GO:0005525">
    <property type="term" value="F:GTP binding"/>
    <property type="evidence" value="ECO:0007669"/>
    <property type="project" value="UniProtKB-KW"/>
</dbReference>
<dbReference type="GO" id="GO:0003924">
    <property type="term" value="F:GTPase activity"/>
    <property type="evidence" value="ECO:0000318"/>
    <property type="project" value="GO_Central"/>
</dbReference>
<dbReference type="GO" id="GO:0006888">
    <property type="term" value="P:endoplasmic reticulum to Golgi vesicle-mediated transport"/>
    <property type="evidence" value="ECO:0000318"/>
    <property type="project" value="GO_Central"/>
</dbReference>
<dbReference type="GO" id="GO:0006886">
    <property type="term" value="P:intracellular protein transport"/>
    <property type="evidence" value="ECO:0007669"/>
    <property type="project" value="InterPro"/>
</dbReference>
<dbReference type="GO" id="GO:0061024">
    <property type="term" value="P:membrane organization"/>
    <property type="evidence" value="ECO:0000318"/>
    <property type="project" value="GO_Central"/>
</dbReference>
<dbReference type="GO" id="GO:0003400">
    <property type="term" value="P:regulation of COPII vesicle coating"/>
    <property type="evidence" value="ECO:0000318"/>
    <property type="project" value="GO_Central"/>
</dbReference>
<dbReference type="GO" id="GO:0016050">
    <property type="term" value="P:vesicle organization"/>
    <property type="evidence" value="ECO:0000318"/>
    <property type="project" value="GO_Central"/>
</dbReference>
<dbReference type="CDD" id="cd00879">
    <property type="entry name" value="Sar1"/>
    <property type="match status" value="1"/>
</dbReference>
<dbReference type="FunFam" id="3.40.50.300:FF:000161">
    <property type="entry name" value="Small COPII coat GTPase"/>
    <property type="match status" value="1"/>
</dbReference>
<dbReference type="Gene3D" id="3.40.50.300">
    <property type="entry name" value="P-loop containing nucleotide triphosphate hydrolases"/>
    <property type="match status" value="1"/>
</dbReference>
<dbReference type="InterPro" id="IPR027417">
    <property type="entry name" value="P-loop_NTPase"/>
</dbReference>
<dbReference type="InterPro" id="IPR005225">
    <property type="entry name" value="Small_GTP-bd"/>
</dbReference>
<dbReference type="InterPro" id="IPR006689">
    <property type="entry name" value="Small_GTPase_ARF/SAR"/>
</dbReference>
<dbReference type="InterPro" id="IPR006687">
    <property type="entry name" value="Small_GTPase_SAR1"/>
</dbReference>
<dbReference type="NCBIfam" id="TIGR00231">
    <property type="entry name" value="small_GTP"/>
    <property type="match status" value="1"/>
</dbReference>
<dbReference type="PANTHER" id="PTHR45684">
    <property type="entry name" value="RE74312P"/>
    <property type="match status" value="1"/>
</dbReference>
<dbReference type="Pfam" id="PF00025">
    <property type="entry name" value="Arf"/>
    <property type="match status" value="1"/>
</dbReference>
<dbReference type="PRINTS" id="PR00328">
    <property type="entry name" value="SAR1GTPBP"/>
</dbReference>
<dbReference type="SMART" id="SM00177">
    <property type="entry name" value="ARF"/>
    <property type="match status" value="1"/>
</dbReference>
<dbReference type="SMART" id="SM00178">
    <property type="entry name" value="SAR"/>
    <property type="match status" value="1"/>
</dbReference>
<dbReference type="SUPFAM" id="SSF52540">
    <property type="entry name" value="P-loop containing nucleoside triphosphate hydrolases"/>
    <property type="match status" value="1"/>
</dbReference>
<dbReference type="PROSITE" id="PS51422">
    <property type="entry name" value="SAR1"/>
    <property type="match status" value="1"/>
</dbReference>
<accession>Q4P0I7</accession>
<accession>A0A0D1DME0</accession>
<evidence type="ECO:0000250" key="1"/>
<evidence type="ECO:0000305" key="2"/>
<name>SAR1_MYCMD</name>
<comment type="function">
    <text evidence="1">Small GTPase component of the coat protein complex II (COPII) which promotes the formation of transport vesicles from the endoplasmic reticulum (ER). The coat has two main functions, the physical deformation of the endoplasmic reticulum membrane into vesicles and the selection of cargo molecules. SAR1 controls the coat assembly in a stepwise manner. Activated SAR1-GTP binds to membranes first and recruits the SEC23/24 complex. These SEC23/24-SAR1 prebudding intermediates are then collected by the SEC13/31 complex as subunits polymerize to form coated transport vesicles. Conversion to SAR1-GDP triggers coat release and recycles COPII subunits (By similarity).</text>
</comment>
<comment type="catalytic activity">
    <reaction>
        <text>GTP + H2O = GDP + phosphate + H(+)</text>
        <dbReference type="Rhea" id="RHEA:19669"/>
        <dbReference type="ChEBI" id="CHEBI:15377"/>
        <dbReference type="ChEBI" id="CHEBI:15378"/>
        <dbReference type="ChEBI" id="CHEBI:37565"/>
        <dbReference type="ChEBI" id="CHEBI:43474"/>
        <dbReference type="ChEBI" id="CHEBI:58189"/>
    </reaction>
</comment>
<comment type="subunit">
    <text evidence="1">COPII is composed of at least 5 proteins: the SEC23/24 complex, the SEC13/31 complex and SAR1.</text>
</comment>
<comment type="subcellular location">
    <subcellularLocation>
        <location evidence="1">Cytoplasmic vesicle</location>
        <location evidence="1">COPII-coated vesicle membrane</location>
        <topology evidence="1">Peripheral membrane protein</topology>
        <orientation evidence="1">Cytoplasmic side</orientation>
    </subcellularLocation>
    <subcellularLocation>
        <location evidence="1">Endoplasmic reticulum membrane</location>
        <topology evidence="1">Peripheral membrane protein</topology>
        <orientation evidence="1">Cytoplasmic side</orientation>
    </subcellularLocation>
    <subcellularLocation>
        <location evidence="1">Golgi apparatus membrane</location>
        <topology evidence="1">Peripheral membrane protein</topology>
        <orientation evidence="1">Cytoplasmic side</orientation>
    </subcellularLocation>
</comment>
<comment type="similarity">
    <text evidence="2">Belongs to the small GTPase superfamily. SAR1 family.</text>
</comment>
<protein>
    <recommendedName>
        <fullName>Small COPII coat GTPase SAR1</fullName>
        <ecNumber>3.6.5.-</ecNumber>
    </recommendedName>
</protein>
<organism>
    <name type="scientific">Mycosarcoma maydis</name>
    <name type="common">Corn smut fungus</name>
    <name type="synonym">Ustilago maydis</name>
    <dbReference type="NCBI Taxonomy" id="5270"/>
    <lineage>
        <taxon>Eukaryota</taxon>
        <taxon>Fungi</taxon>
        <taxon>Dikarya</taxon>
        <taxon>Basidiomycota</taxon>
        <taxon>Ustilaginomycotina</taxon>
        <taxon>Ustilaginomycetes</taxon>
        <taxon>Ustilaginales</taxon>
        <taxon>Ustilaginaceae</taxon>
        <taxon>Mycosarcoma</taxon>
    </lineage>
</organism>
<keyword id="KW-0968">Cytoplasmic vesicle</keyword>
<keyword id="KW-0256">Endoplasmic reticulum</keyword>
<keyword id="KW-0931">ER-Golgi transport</keyword>
<keyword id="KW-0333">Golgi apparatus</keyword>
<keyword id="KW-0342">GTP-binding</keyword>
<keyword id="KW-0378">Hydrolase</keyword>
<keyword id="KW-0472">Membrane</keyword>
<keyword id="KW-0547">Nucleotide-binding</keyword>
<keyword id="KW-0653">Protein transport</keyword>
<keyword id="KW-1185">Reference proteome</keyword>
<keyword id="KW-0813">Transport</keyword>
<gene>
    <name type="primary">SAR1</name>
    <name type="ORF">UMAG_06376</name>
</gene>
<proteinExistence type="inferred from homology"/>